<accession>Q12S21</accession>
<keyword id="KW-0963">Cytoplasm</keyword>
<keyword id="KW-1185">Reference proteome</keyword>
<organism>
    <name type="scientific">Shewanella denitrificans (strain OS217 / ATCC BAA-1090 / DSM 15013)</name>
    <dbReference type="NCBI Taxonomy" id="318161"/>
    <lineage>
        <taxon>Bacteria</taxon>
        <taxon>Pseudomonadati</taxon>
        <taxon>Pseudomonadota</taxon>
        <taxon>Gammaproteobacteria</taxon>
        <taxon>Alteromonadales</taxon>
        <taxon>Shewanellaceae</taxon>
        <taxon>Shewanella</taxon>
    </lineage>
</organism>
<dbReference type="EMBL" id="CP000302">
    <property type="protein sequence ID" value="ABE53755.1"/>
    <property type="molecule type" value="Genomic_DNA"/>
</dbReference>
<dbReference type="RefSeq" id="WP_011494921.1">
    <property type="nucleotide sequence ID" value="NC_007954.1"/>
</dbReference>
<dbReference type="SMR" id="Q12S21"/>
<dbReference type="STRING" id="318161.Sden_0463"/>
<dbReference type="KEGG" id="sdn:Sden_0463"/>
<dbReference type="eggNOG" id="COG0684">
    <property type="taxonomic scope" value="Bacteria"/>
</dbReference>
<dbReference type="HOGENOM" id="CLU_072626_4_0_6"/>
<dbReference type="OrthoDB" id="943692at2"/>
<dbReference type="Proteomes" id="UP000001982">
    <property type="component" value="Chromosome"/>
</dbReference>
<dbReference type="GO" id="GO:0005737">
    <property type="term" value="C:cytoplasm"/>
    <property type="evidence" value="ECO:0007669"/>
    <property type="project" value="UniProtKB-SubCell"/>
</dbReference>
<dbReference type="GO" id="GO:0060698">
    <property type="term" value="F:endoribonuclease inhibitor activity"/>
    <property type="evidence" value="ECO:0007669"/>
    <property type="project" value="UniProtKB-UniRule"/>
</dbReference>
<dbReference type="GO" id="GO:0019899">
    <property type="term" value="F:enzyme binding"/>
    <property type="evidence" value="ECO:0007669"/>
    <property type="project" value="UniProtKB-UniRule"/>
</dbReference>
<dbReference type="GO" id="GO:0051252">
    <property type="term" value="P:regulation of RNA metabolic process"/>
    <property type="evidence" value="ECO:0007669"/>
    <property type="project" value="InterPro"/>
</dbReference>
<dbReference type="CDD" id="cd16841">
    <property type="entry name" value="RraA_family"/>
    <property type="match status" value="1"/>
</dbReference>
<dbReference type="Gene3D" id="3.50.30.40">
    <property type="entry name" value="Ribonuclease E inhibitor RraA/RraA-like"/>
    <property type="match status" value="1"/>
</dbReference>
<dbReference type="HAMAP" id="MF_00471">
    <property type="entry name" value="RraA"/>
    <property type="match status" value="1"/>
</dbReference>
<dbReference type="InterPro" id="IPR010203">
    <property type="entry name" value="RraA"/>
</dbReference>
<dbReference type="InterPro" id="IPR005493">
    <property type="entry name" value="RraA/RraA-like"/>
</dbReference>
<dbReference type="InterPro" id="IPR036704">
    <property type="entry name" value="RraA/RraA-like_sf"/>
</dbReference>
<dbReference type="InterPro" id="IPR014339">
    <property type="entry name" value="RraA_gpbac"/>
</dbReference>
<dbReference type="NCBIfam" id="TIGR01935">
    <property type="entry name" value="NOT-MenG"/>
    <property type="match status" value="1"/>
</dbReference>
<dbReference type="NCBIfam" id="NF006875">
    <property type="entry name" value="PRK09372.1"/>
    <property type="match status" value="1"/>
</dbReference>
<dbReference type="NCBIfam" id="TIGR02998">
    <property type="entry name" value="RraA_entero"/>
    <property type="match status" value="1"/>
</dbReference>
<dbReference type="PANTHER" id="PTHR33254">
    <property type="entry name" value="4-HYDROXY-4-METHYL-2-OXOGLUTARATE ALDOLASE 3-RELATED"/>
    <property type="match status" value="1"/>
</dbReference>
<dbReference type="PANTHER" id="PTHR33254:SF29">
    <property type="entry name" value="REGULATOR OF RIBONUCLEASE ACTIVITY A"/>
    <property type="match status" value="1"/>
</dbReference>
<dbReference type="Pfam" id="PF03737">
    <property type="entry name" value="RraA-like"/>
    <property type="match status" value="1"/>
</dbReference>
<dbReference type="SUPFAM" id="SSF89562">
    <property type="entry name" value="RraA-like"/>
    <property type="match status" value="1"/>
</dbReference>
<evidence type="ECO:0000255" key="1">
    <source>
        <dbReference type="HAMAP-Rule" id="MF_00471"/>
    </source>
</evidence>
<name>RRAA_SHEDO</name>
<sequence>MEYNTSELCDMYIDVVDVVEPMFSNYGGCSSFGGAISTVKCFEDNGLIADALQEDGEGKVLLVDGGGSLRRALIDASIAQIAVNNNWEGIIVYGSVRDVDALEELDLGIQALASIPVGAEGNGVGEIELPVNFGGVTFLPGDHIYADNTGVILSPEPLDID</sequence>
<gene>
    <name evidence="1" type="primary">rraA</name>
    <name type="ordered locus">Sden_0463</name>
</gene>
<protein>
    <recommendedName>
        <fullName evidence="1">Regulator of ribonuclease activity A</fullName>
    </recommendedName>
</protein>
<feature type="chain" id="PRO_1000013871" description="Regulator of ribonuclease activity A">
    <location>
        <begin position="1"/>
        <end position="161"/>
    </location>
</feature>
<comment type="function">
    <text evidence="1">Globally modulates RNA abundance by binding to RNase E (Rne) and regulating its endonucleolytic activity. Can modulate Rne action in a substrate-dependent manner by altering the composition of the degradosome. Modulates RNA-binding and helicase activities of the degradosome.</text>
</comment>
<comment type="subunit">
    <text evidence="1">Homotrimer. Binds to both RNA-binding sites in the C-terminal region of Rne and to RhlB.</text>
</comment>
<comment type="subcellular location">
    <subcellularLocation>
        <location evidence="1">Cytoplasm</location>
    </subcellularLocation>
</comment>
<comment type="similarity">
    <text evidence="1">Belongs to the RraA family.</text>
</comment>
<proteinExistence type="inferred from homology"/>
<reference key="1">
    <citation type="submission" date="2006-03" db="EMBL/GenBank/DDBJ databases">
        <title>Complete sequence of Shewanella denitrificans OS217.</title>
        <authorList>
            <consortium name="US DOE Joint Genome Institute"/>
            <person name="Copeland A."/>
            <person name="Lucas S."/>
            <person name="Lapidus A."/>
            <person name="Barry K."/>
            <person name="Detter J.C."/>
            <person name="Glavina del Rio T."/>
            <person name="Hammon N."/>
            <person name="Israni S."/>
            <person name="Dalin E."/>
            <person name="Tice H."/>
            <person name="Pitluck S."/>
            <person name="Brettin T."/>
            <person name="Bruce D."/>
            <person name="Han C."/>
            <person name="Tapia R."/>
            <person name="Gilna P."/>
            <person name="Kiss H."/>
            <person name="Schmutz J."/>
            <person name="Larimer F."/>
            <person name="Land M."/>
            <person name="Hauser L."/>
            <person name="Kyrpides N."/>
            <person name="Lykidis A."/>
            <person name="Richardson P."/>
        </authorList>
    </citation>
    <scope>NUCLEOTIDE SEQUENCE [LARGE SCALE GENOMIC DNA]</scope>
    <source>
        <strain>OS217 / ATCC BAA-1090 / DSM 15013</strain>
    </source>
</reference>